<organism>
    <name type="scientific">Arabidopsis thaliana</name>
    <name type="common">Mouse-ear cress</name>
    <dbReference type="NCBI Taxonomy" id="3702"/>
    <lineage>
        <taxon>Eukaryota</taxon>
        <taxon>Viridiplantae</taxon>
        <taxon>Streptophyta</taxon>
        <taxon>Embryophyta</taxon>
        <taxon>Tracheophyta</taxon>
        <taxon>Spermatophyta</taxon>
        <taxon>Magnoliopsida</taxon>
        <taxon>eudicotyledons</taxon>
        <taxon>Gunneridae</taxon>
        <taxon>Pentapetalae</taxon>
        <taxon>rosids</taxon>
        <taxon>malvids</taxon>
        <taxon>Brassicales</taxon>
        <taxon>Brassicaceae</taxon>
        <taxon>Camelineae</taxon>
        <taxon>Arabidopsis</taxon>
    </lineage>
</organism>
<evidence type="ECO:0000250" key="1"/>
<evidence type="ECO:0000305" key="2"/>
<feature type="chain" id="PRO_0000423335" description="DNA-directed RNA polymerase subunit 7-like protein">
    <location>
        <begin position="1"/>
        <end position="200"/>
    </location>
</feature>
<gene>
    <name type="primary">NRPB7L</name>
    <name type="ordered locus">At4g14520</name>
    <name type="ORF">dl3300w</name>
</gene>
<protein>
    <recommendedName>
        <fullName>DNA-directed RNA polymerase subunit 7-like protein</fullName>
    </recommendedName>
</protein>
<sequence>MFSEVEMARDVAICAKHLNGQSPHQPILCRLLQDLIHEKACREHGFYLGITALKSIGNNKNNNIDNENNHQAKILTFPVSFTCRTFLPARGDILQGTVKKVLWNGAFIRSGPLRYAYLSLLKMPHYHYVHSPLSEDEKPHFQKDDLSKIAVGVVVRFQVLAVRFKERPHKRRNDYYVLATLEGNGSFGPISLTGSDEPYM</sequence>
<comment type="subcellular location">
    <subcellularLocation>
        <location evidence="1">Nucleus</location>
    </subcellularLocation>
</comment>
<comment type="similarity">
    <text evidence="2">Belongs to the eukaryotic RPB7/RPC8 RNA polymerase subunit family.</text>
</comment>
<comment type="sequence caution" evidence="2">
    <conflict type="erroneous initiation">
        <sequence resource="EMBL-CDS" id="CAB10231"/>
    </conflict>
    <text>Truncated N-terminus.</text>
</comment>
<comment type="sequence caution" evidence="2">
    <conflict type="erroneous initiation">
        <sequence resource="EMBL-CDS" id="CAB78494"/>
    </conflict>
    <text>Truncated N-terminus.</text>
</comment>
<dbReference type="EMBL" id="Z97336">
    <property type="protein sequence ID" value="CAB10231.1"/>
    <property type="status" value="ALT_INIT"/>
    <property type="molecule type" value="Genomic_DNA"/>
</dbReference>
<dbReference type="EMBL" id="AL161539">
    <property type="protein sequence ID" value="CAB78494.1"/>
    <property type="status" value="ALT_INIT"/>
    <property type="molecule type" value="Genomic_DNA"/>
</dbReference>
<dbReference type="EMBL" id="CP002687">
    <property type="protein sequence ID" value="AEE83454.1"/>
    <property type="molecule type" value="Genomic_DNA"/>
</dbReference>
<dbReference type="EMBL" id="CP002687">
    <property type="protein sequence ID" value="AEE83455.1"/>
    <property type="molecule type" value="Genomic_DNA"/>
</dbReference>
<dbReference type="EMBL" id="CP002687">
    <property type="protein sequence ID" value="AEE83456.1"/>
    <property type="molecule type" value="Genomic_DNA"/>
</dbReference>
<dbReference type="EMBL" id="CP002687">
    <property type="protein sequence ID" value="ANM66735.1"/>
    <property type="molecule type" value="Genomic_DNA"/>
</dbReference>
<dbReference type="EMBL" id="CP002687">
    <property type="protein sequence ID" value="ANM66736.1"/>
    <property type="molecule type" value="Genomic_DNA"/>
</dbReference>
<dbReference type="EMBL" id="CP002687">
    <property type="protein sequence ID" value="ANM66737.1"/>
    <property type="molecule type" value="Genomic_DNA"/>
</dbReference>
<dbReference type="EMBL" id="CP002687">
    <property type="protein sequence ID" value="ANM66738.1"/>
    <property type="molecule type" value="Genomic_DNA"/>
</dbReference>
<dbReference type="EMBL" id="CP002687">
    <property type="protein sequence ID" value="ANM66739.1"/>
    <property type="molecule type" value="Genomic_DNA"/>
</dbReference>
<dbReference type="EMBL" id="CP002687">
    <property type="protein sequence ID" value="ANM66740.1"/>
    <property type="molecule type" value="Genomic_DNA"/>
</dbReference>
<dbReference type="EMBL" id="CP002687">
    <property type="protein sequence ID" value="ANM66741.1"/>
    <property type="molecule type" value="Genomic_DNA"/>
</dbReference>
<dbReference type="EMBL" id="CP002687">
    <property type="protein sequence ID" value="ANM66742.1"/>
    <property type="molecule type" value="Genomic_DNA"/>
</dbReference>
<dbReference type="EMBL" id="BT010936">
    <property type="protein sequence ID" value="AAR24714.1"/>
    <property type="molecule type" value="mRNA"/>
</dbReference>
<dbReference type="EMBL" id="BT011642">
    <property type="protein sequence ID" value="AAS47648.1"/>
    <property type="molecule type" value="mRNA"/>
</dbReference>
<dbReference type="EMBL" id="AK226530">
    <property type="protein sequence ID" value="BAE98669.1"/>
    <property type="molecule type" value="mRNA"/>
</dbReference>
<dbReference type="PIR" id="E71407">
    <property type="entry name" value="E71407"/>
</dbReference>
<dbReference type="RefSeq" id="NP_001190729.1">
    <property type="nucleotide sequence ID" value="NM_001203800.2"/>
</dbReference>
<dbReference type="RefSeq" id="NP_001328613.1">
    <property type="nucleotide sequence ID" value="NM_001340937.1"/>
</dbReference>
<dbReference type="RefSeq" id="NP_001328614.1">
    <property type="nucleotide sequence ID" value="NM_001340936.1"/>
</dbReference>
<dbReference type="RefSeq" id="NP_001328615.1">
    <property type="nucleotide sequence ID" value="NM_001340941.1"/>
</dbReference>
<dbReference type="RefSeq" id="NP_001328616.1">
    <property type="nucleotide sequence ID" value="NM_001340940.1"/>
</dbReference>
<dbReference type="RefSeq" id="NP_001328617.1">
    <property type="nucleotide sequence ID" value="NM_001340939.1"/>
</dbReference>
<dbReference type="RefSeq" id="NP_001328618.1">
    <property type="nucleotide sequence ID" value="NM_001340938.1"/>
</dbReference>
<dbReference type="RefSeq" id="NP_001328619.1">
    <property type="nucleotide sequence ID" value="NM_001340943.1"/>
</dbReference>
<dbReference type="RefSeq" id="NP_001328620.1">
    <property type="nucleotide sequence ID" value="NM_001340942.1"/>
</dbReference>
<dbReference type="RefSeq" id="NP_193188.2">
    <property type="nucleotide sequence ID" value="NM_117532.4"/>
</dbReference>
<dbReference type="RefSeq" id="NP_849385.1">
    <property type="nucleotide sequence ID" value="NM_179054.4"/>
</dbReference>
<dbReference type="SMR" id="Q6NML5"/>
<dbReference type="BioGRID" id="12396">
    <property type="interactions" value="1"/>
</dbReference>
<dbReference type="FunCoup" id="Q6NML5">
    <property type="interactions" value="1"/>
</dbReference>
<dbReference type="STRING" id="3702.Q6NML5"/>
<dbReference type="iPTMnet" id="Q6NML5"/>
<dbReference type="PaxDb" id="3702-AT4G14520.3"/>
<dbReference type="ProteomicsDB" id="228216"/>
<dbReference type="DNASU" id="827099"/>
<dbReference type="EnsemblPlants" id="AT4G14520.1">
    <property type="protein sequence ID" value="AT4G14520.1"/>
    <property type="gene ID" value="AT4G14520"/>
</dbReference>
<dbReference type="EnsemblPlants" id="AT4G14520.10">
    <property type="protein sequence ID" value="AT4G14520.10"/>
    <property type="gene ID" value="AT4G14520"/>
</dbReference>
<dbReference type="EnsemblPlants" id="AT4G14520.11">
    <property type="protein sequence ID" value="AT4G14520.11"/>
    <property type="gene ID" value="AT4G14520"/>
</dbReference>
<dbReference type="EnsemblPlants" id="AT4G14520.2">
    <property type="protein sequence ID" value="AT4G14520.2"/>
    <property type="gene ID" value="AT4G14520"/>
</dbReference>
<dbReference type="EnsemblPlants" id="AT4G14520.3">
    <property type="protein sequence ID" value="AT4G14520.3"/>
    <property type="gene ID" value="AT4G14520"/>
</dbReference>
<dbReference type="EnsemblPlants" id="AT4G14520.4">
    <property type="protein sequence ID" value="AT4G14520.4"/>
    <property type="gene ID" value="AT4G14520"/>
</dbReference>
<dbReference type="EnsemblPlants" id="AT4G14520.5">
    <property type="protein sequence ID" value="AT4G14520.5"/>
    <property type="gene ID" value="AT4G14520"/>
</dbReference>
<dbReference type="EnsemblPlants" id="AT4G14520.6">
    <property type="protein sequence ID" value="AT4G14520.6"/>
    <property type="gene ID" value="AT4G14520"/>
</dbReference>
<dbReference type="EnsemblPlants" id="AT4G14520.7">
    <property type="protein sequence ID" value="AT4G14520.7"/>
    <property type="gene ID" value="AT4G14520"/>
</dbReference>
<dbReference type="EnsemblPlants" id="AT4G14520.8">
    <property type="protein sequence ID" value="AT4G14520.8"/>
    <property type="gene ID" value="AT4G14520"/>
</dbReference>
<dbReference type="EnsemblPlants" id="AT4G14520.9">
    <property type="protein sequence ID" value="AT4G14520.9"/>
    <property type="gene ID" value="AT4G14520"/>
</dbReference>
<dbReference type="GeneID" id="827099"/>
<dbReference type="Gramene" id="AT4G14520.1">
    <property type="protein sequence ID" value="AT4G14520.1"/>
    <property type="gene ID" value="AT4G14520"/>
</dbReference>
<dbReference type="Gramene" id="AT4G14520.10">
    <property type="protein sequence ID" value="AT4G14520.10"/>
    <property type="gene ID" value="AT4G14520"/>
</dbReference>
<dbReference type="Gramene" id="AT4G14520.11">
    <property type="protein sequence ID" value="AT4G14520.11"/>
    <property type="gene ID" value="AT4G14520"/>
</dbReference>
<dbReference type="Gramene" id="AT4G14520.2">
    <property type="protein sequence ID" value="AT4G14520.2"/>
    <property type="gene ID" value="AT4G14520"/>
</dbReference>
<dbReference type="Gramene" id="AT4G14520.3">
    <property type="protein sequence ID" value="AT4G14520.3"/>
    <property type="gene ID" value="AT4G14520"/>
</dbReference>
<dbReference type="Gramene" id="AT4G14520.4">
    <property type="protein sequence ID" value="AT4G14520.4"/>
    <property type="gene ID" value="AT4G14520"/>
</dbReference>
<dbReference type="Gramene" id="AT4G14520.5">
    <property type="protein sequence ID" value="AT4G14520.5"/>
    <property type="gene ID" value="AT4G14520"/>
</dbReference>
<dbReference type="Gramene" id="AT4G14520.6">
    <property type="protein sequence ID" value="AT4G14520.6"/>
    <property type="gene ID" value="AT4G14520"/>
</dbReference>
<dbReference type="Gramene" id="AT4G14520.7">
    <property type="protein sequence ID" value="AT4G14520.7"/>
    <property type="gene ID" value="AT4G14520"/>
</dbReference>
<dbReference type="Gramene" id="AT4G14520.8">
    <property type="protein sequence ID" value="AT4G14520.8"/>
    <property type="gene ID" value="AT4G14520"/>
</dbReference>
<dbReference type="Gramene" id="AT4G14520.9">
    <property type="protein sequence ID" value="AT4G14520.9"/>
    <property type="gene ID" value="AT4G14520"/>
</dbReference>
<dbReference type="KEGG" id="ath:AT4G14520"/>
<dbReference type="Araport" id="AT4G14520"/>
<dbReference type="TAIR" id="AT4G14520"/>
<dbReference type="eggNOG" id="KOG3298">
    <property type="taxonomic scope" value="Eukaryota"/>
</dbReference>
<dbReference type="HOGENOM" id="CLU_085878_3_0_1"/>
<dbReference type="InParanoid" id="Q6NML5"/>
<dbReference type="OMA" id="WNGAFIR"/>
<dbReference type="OrthoDB" id="1162399at2759"/>
<dbReference type="PhylomeDB" id="Q6NML5"/>
<dbReference type="PRO" id="PR:Q6NML5"/>
<dbReference type="Proteomes" id="UP000006548">
    <property type="component" value="Chromosome 4"/>
</dbReference>
<dbReference type="ExpressionAtlas" id="Q6NML5">
    <property type="expression patterns" value="baseline and differential"/>
</dbReference>
<dbReference type="GO" id="GO:0000428">
    <property type="term" value="C:DNA-directed RNA polymerase complex"/>
    <property type="evidence" value="ECO:0007669"/>
    <property type="project" value="UniProtKB-KW"/>
</dbReference>
<dbReference type="GO" id="GO:0005634">
    <property type="term" value="C:nucleus"/>
    <property type="evidence" value="ECO:0007669"/>
    <property type="project" value="UniProtKB-SubCell"/>
</dbReference>
<dbReference type="GO" id="GO:0003676">
    <property type="term" value="F:nucleic acid binding"/>
    <property type="evidence" value="ECO:0007669"/>
    <property type="project" value="InterPro"/>
</dbReference>
<dbReference type="GO" id="GO:0006352">
    <property type="term" value="P:DNA-templated transcription initiation"/>
    <property type="evidence" value="ECO:0007669"/>
    <property type="project" value="InterPro"/>
</dbReference>
<dbReference type="FunFam" id="2.40.50.140:FF:000713">
    <property type="match status" value="1"/>
</dbReference>
<dbReference type="Gene3D" id="2.40.50.140">
    <property type="entry name" value="Nucleic acid-binding proteins"/>
    <property type="match status" value="1"/>
</dbReference>
<dbReference type="Gene3D" id="3.30.1490.120">
    <property type="entry name" value="RNA polymerase Rpb7-like, N-terminal domain"/>
    <property type="match status" value="1"/>
</dbReference>
<dbReference type="InterPro" id="IPR012340">
    <property type="entry name" value="NA-bd_OB-fold"/>
</dbReference>
<dbReference type="InterPro" id="IPR036898">
    <property type="entry name" value="RNA_pol_Rpb7-like_N_sf"/>
</dbReference>
<dbReference type="InterPro" id="IPR045113">
    <property type="entry name" value="Rpb7-like"/>
</dbReference>
<dbReference type="InterPro" id="IPR003029">
    <property type="entry name" value="S1_domain"/>
</dbReference>
<dbReference type="PANTHER" id="PTHR12709">
    <property type="entry name" value="DNA-DIRECTED RNA POLYMERASE II, III"/>
    <property type="match status" value="1"/>
</dbReference>
<dbReference type="PANTHER" id="PTHR12709:SF6">
    <property type="entry name" value="DNA-DIRECTED RNA POLYMERASE SUBUNIT 7-LIKE PROTEIN"/>
    <property type="match status" value="1"/>
</dbReference>
<dbReference type="SMART" id="SM00316">
    <property type="entry name" value="S1"/>
    <property type="match status" value="1"/>
</dbReference>
<dbReference type="SUPFAM" id="SSF50249">
    <property type="entry name" value="Nucleic acid-binding proteins"/>
    <property type="match status" value="1"/>
</dbReference>
<name>RPB7L_ARATH</name>
<reference key="1">
    <citation type="journal article" date="1998" name="Nature">
        <title>Analysis of 1.9 Mb of contiguous sequence from chromosome 4 of Arabidopsis thaliana.</title>
        <authorList>
            <person name="Bevan M."/>
            <person name="Bancroft I."/>
            <person name="Bent E."/>
            <person name="Love K."/>
            <person name="Goodman H.M."/>
            <person name="Dean C."/>
            <person name="Bergkamp R."/>
            <person name="Dirkse W."/>
            <person name="van Staveren M."/>
            <person name="Stiekema W."/>
            <person name="Drost L."/>
            <person name="Ridley P."/>
            <person name="Hudson S.-A."/>
            <person name="Patel K."/>
            <person name="Murphy G."/>
            <person name="Piffanelli P."/>
            <person name="Wedler H."/>
            <person name="Wedler E."/>
            <person name="Wambutt R."/>
            <person name="Weitzenegger T."/>
            <person name="Pohl T."/>
            <person name="Terryn N."/>
            <person name="Gielen J."/>
            <person name="Villarroel R."/>
            <person name="De Clercq R."/>
            <person name="van Montagu M."/>
            <person name="Lecharny A."/>
            <person name="Aubourg S."/>
            <person name="Gy I."/>
            <person name="Kreis M."/>
            <person name="Lao N."/>
            <person name="Kavanagh T."/>
            <person name="Hempel S."/>
            <person name="Kotter P."/>
            <person name="Entian K.-D."/>
            <person name="Rieger M."/>
            <person name="Schaefer M."/>
            <person name="Funk B."/>
            <person name="Mueller-Auer S."/>
            <person name="Silvey M."/>
            <person name="James R."/>
            <person name="Monfort A."/>
            <person name="Pons A."/>
            <person name="Puigdomenech P."/>
            <person name="Douka A."/>
            <person name="Voukelatou E."/>
            <person name="Milioni D."/>
            <person name="Hatzopoulos P."/>
            <person name="Piravandi E."/>
            <person name="Obermaier B."/>
            <person name="Hilbert H."/>
            <person name="Duesterhoeft A."/>
            <person name="Moores T."/>
            <person name="Jones J.D.G."/>
            <person name="Eneva T."/>
            <person name="Palme K."/>
            <person name="Benes V."/>
            <person name="Rechmann S."/>
            <person name="Ansorge W."/>
            <person name="Cooke R."/>
            <person name="Berger C."/>
            <person name="Delseny M."/>
            <person name="Voet M."/>
            <person name="Volckaert G."/>
            <person name="Mewes H.-W."/>
            <person name="Klosterman S."/>
            <person name="Schueller C."/>
            <person name="Chalwatzis N."/>
        </authorList>
    </citation>
    <scope>NUCLEOTIDE SEQUENCE [LARGE SCALE GENOMIC DNA]</scope>
    <source>
        <strain>cv. Columbia</strain>
    </source>
</reference>
<reference key="2">
    <citation type="journal article" date="1999" name="Nature">
        <title>Sequence and analysis of chromosome 4 of the plant Arabidopsis thaliana.</title>
        <authorList>
            <person name="Mayer K.F.X."/>
            <person name="Schueller C."/>
            <person name="Wambutt R."/>
            <person name="Murphy G."/>
            <person name="Volckaert G."/>
            <person name="Pohl T."/>
            <person name="Duesterhoeft A."/>
            <person name="Stiekema W."/>
            <person name="Entian K.-D."/>
            <person name="Terryn N."/>
            <person name="Harris B."/>
            <person name="Ansorge W."/>
            <person name="Brandt P."/>
            <person name="Grivell L.A."/>
            <person name="Rieger M."/>
            <person name="Weichselgartner M."/>
            <person name="de Simone V."/>
            <person name="Obermaier B."/>
            <person name="Mache R."/>
            <person name="Mueller M."/>
            <person name="Kreis M."/>
            <person name="Delseny M."/>
            <person name="Puigdomenech P."/>
            <person name="Watson M."/>
            <person name="Schmidtheini T."/>
            <person name="Reichert B."/>
            <person name="Portetelle D."/>
            <person name="Perez-Alonso M."/>
            <person name="Boutry M."/>
            <person name="Bancroft I."/>
            <person name="Vos P."/>
            <person name="Hoheisel J."/>
            <person name="Zimmermann W."/>
            <person name="Wedler H."/>
            <person name="Ridley P."/>
            <person name="Langham S.-A."/>
            <person name="McCullagh B."/>
            <person name="Bilham L."/>
            <person name="Robben J."/>
            <person name="van der Schueren J."/>
            <person name="Grymonprez B."/>
            <person name="Chuang Y.-J."/>
            <person name="Vandenbussche F."/>
            <person name="Braeken M."/>
            <person name="Weltjens I."/>
            <person name="Voet M."/>
            <person name="Bastiaens I."/>
            <person name="Aert R."/>
            <person name="Defoor E."/>
            <person name="Weitzenegger T."/>
            <person name="Bothe G."/>
            <person name="Ramsperger U."/>
            <person name="Hilbert H."/>
            <person name="Braun M."/>
            <person name="Holzer E."/>
            <person name="Brandt A."/>
            <person name="Peters S."/>
            <person name="van Staveren M."/>
            <person name="Dirkse W."/>
            <person name="Mooijman P."/>
            <person name="Klein Lankhorst R."/>
            <person name="Rose M."/>
            <person name="Hauf J."/>
            <person name="Koetter P."/>
            <person name="Berneiser S."/>
            <person name="Hempel S."/>
            <person name="Feldpausch M."/>
            <person name="Lamberth S."/>
            <person name="Van den Daele H."/>
            <person name="De Keyser A."/>
            <person name="Buysshaert C."/>
            <person name="Gielen J."/>
            <person name="Villarroel R."/>
            <person name="De Clercq R."/>
            <person name="van Montagu M."/>
            <person name="Rogers J."/>
            <person name="Cronin A."/>
            <person name="Quail M.A."/>
            <person name="Bray-Allen S."/>
            <person name="Clark L."/>
            <person name="Doggett J."/>
            <person name="Hall S."/>
            <person name="Kay M."/>
            <person name="Lennard N."/>
            <person name="McLay K."/>
            <person name="Mayes R."/>
            <person name="Pettett A."/>
            <person name="Rajandream M.A."/>
            <person name="Lyne M."/>
            <person name="Benes V."/>
            <person name="Rechmann S."/>
            <person name="Borkova D."/>
            <person name="Bloecker H."/>
            <person name="Scharfe M."/>
            <person name="Grimm M."/>
            <person name="Loehnert T.-H."/>
            <person name="Dose S."/>
            <person name="de Haan M."/>
            <person name="Maarse A.C."/>
            <person name="Schaefer M."/>
            <person name="Mueller-Auer S."/>
            <person name="Gabel C."/>
            <person name="Fuchs M."/>
            <person name="Fartmann B."/>
            <person name="Granderath K."/>
            <person name="Dauner D."/>
            <person name="Herzl A."/>
            <person name="Neumann S."/>
            <person name="Argiriou A."/>
            <person name="Vitale D."/>
            <person name="Liguori R."/>
            <person name="Piravandi E."/>
            <person name="Massenet O."/>
            <person name="Quigley F."/>
            <person name="Clabauld G."/>
            <person name="Muendlein A."/>
            <person name="Felber R."/>
            <person name="Schnabl S."/>
            <person name="Hiller R."/>
            <person name="Schmidt W."/>
            <person name="Lecharny A."/>
            <person name="Aubourg S."/>
            <person name="Chefdor F."/>
            <person name="Cooke R."/>
            <person name="Berger C."/>
            <person name="Monfort A."/>
            <person name="Casacuberta E."/>
            <person name="Gibbons T."/>
            <person name="Weber N."/>
            <person name="Vandenbol M."/>
            <person name="Bargues M."/>
            <person name="Terol J."/>
            <person name="Torres A."/>
            <person name="Perez-Perez A."/>
            <person name="Purnelle B."/>
            <person name="Bent E."/>
            <person name="Johnson S."/>
            <person name="Tacon D."/>
            <person name="Jesse T."/>
            <person name="Heijnen L."/>
            <person name="Schwarz S."/>
            <person name="Scholler P."/>
            <person name="Heber S."/>
            <person name="Francs P."/>
            <person name="Bielke C."/>
            <person name="Frishman D."/>
            <person name="Haase D."/>
            <person name="Lemcke K."/>
            <person name="Mewes H.-W."/>
            <person name="Stocker S."/>
            <person name="Zaccaria P."/>
            <person name="Bevan M."/>
            <person name="Wilson R.K."/>
            <person name="de la Bastide M."/>
            <person name="Habermann K."/>
            <person name="Parnell L."/>
            <person name="Dedhia N."/>
            <person name="Gnoj L."/>
            <person name="Schutz K."/>
            <person name="Huang E."/>
            <person name="Spiegel L."/>
            <person name="Sekhon M."/>
            <person name="Murray J."/>
            <person name="Sheet P."/>
            <person name="Cordes M."/>
            <person name="Abu-Threideh J."/>
            <person name="Stoneking T."/>
            <person name="Kalicki J."/>
            <person name="Graves T."/>
            <person name="Harmon G."/>
            <person name="Edwards J."/>
            <person name="Latreille P."/>
            <person name="Courtney L."/>
            <person name="Cloud J."/>
            <person name="Abbott A."/>
            <person name="Scott K."/>
            <person name="Johnson D."/>
            <person name="Minx P."/>
            <person name="Bentley D."/>
            <person name="Fulton B."/>
            <person name="Miller N."/>
            <person name="Greco T."/>
            <person name="Kemp K."/>
            <person name="Kramer J."/>
            <person name="Fulton L."/>
            <person name="Mardis E."/>
            <person name="Dante M."/>
            <person name="Pepin K."/>
            <person name="Hillier L.W."/>
            <person name="Nelson J."/>
            <person name="Spieth J."/>
            <person name="Ryan E."/>
            <person name="Andrews S."/>
            <person name="Geisel C."/>
            <person name="Layman D."/>
            <person name="Du H."/>
            <person name="Ali J."/>
            <person name="Berghoff A."/>
            <person name="Jones K."/>
            <person name="Drone K."/>
            <person name="Cotton M."/>
            <person name="Joshu C."/>
            <person name="Antonoiu B."/>
            <person name="Zidanic M."/>
            <person name="Strong C."/>
            <person name="Sun H."/>
            <person name="Lamar B."/>
            <person name="Yordan C."/>
            <person name="Ma P."/>
            <person name="Zhong J."/>
            <person name="Preston R."/>
            <person name="Vil D."/>
            <person name="Shekher M."/>
            <person name="Matero A."/>
            <person name="Shah R."/>
            <person name="Swaby I.K."/>
            <person name="O'Shaughnessy A."/>
            <person name="Rodriguez M."/>
            <person name="Hoffman J."/>
            <person name="Till S."/>
            <person name="Granat S."/>
            <person name="Shohdy N."/>
            <person name="Hasegawa A."/>
            <person name="Hameed A."/>
            <person name="Lodhi M."/>
            <person name="Johnson A."/>
            <person name="Chen E."/>
            <person name="Marra M.A."/>
            <person name="Martienssen R."/>
            <person name="McCombie W.R."/>
        </authorList>
    </citation>
    <scope>NUCLEOTIDE SEQUENCE [LARGE SCALE GENOMIC DNA]</scope>
    <source>
        <strain>cv. Columbia</strain>
    </source>
</reference>
<reference key="3">
    <citation type="journal article" date="2017" name="Plant J.">
        <title>Araport11: a complete reannotation of the Arabidopsis thaliana reference genome.</title>
        <authorList>
            <person name="Cheng C.Y."/>
            <person name="Krishnakumar V."/>
            <person name="Chan A.P."/>
            <person name="Thibaud-Nissen F."/>
            <person name="Schobel S."/>
            <person name="Town C.D."/>
        </authorList>
    </citation>
    <scope>GENOME REANNOTATION</scope>
    <source>
        <strain>cv. Columbia</strain>
    </source>
</reference>
<reference key="4">
    <citation type="submission" date="2004-02" db="EMBL/GenBank/DDBJ databases">
        <title>Arabidopsis ORF clones.</title>
        <authorList>
            <person name="Kim C.J."/>
            <person name="Chen H."/>
            <person name="Cheuk R."/>
            <person name="Shinn P."/>
            <person name="Ecker J.R."/>
        </authorList>
    </citation>
    <scope>NUCLEOTIDE SEQUENCE [LARGE SCALE MRNA]</scope>
</reference>
<reference key="5">
    <citation type="submission" date="2006-07" db="EMBL/GenBank/DDBJ databases">
        <title>Large-scale analysis of RIKEN Arabidopsis full-length (RAFL) cDNAs.</title>
        <authorList>
            <person name="Totoki Y."/>
            <person name="Seki M."/>
            <person name="Ishida J."/>
            <person name="Nakajima M."/>
            <person name="Enju A."/>
            <person name="Kamiya A."/>
            <person name="Narusaka M."/>
            <person name="Shin-i T."/>
            <person name="Nakagawa M."/>
            <person name="Sakamoto N."/>
            <person name="Oishi K."/>
            <person name="Kohara Y."/>
            <person name="Kobayashi M."/>
            <person name="Toyoda A."/>
            <person name="Sakaki Y."/>
            <person name="Sakurai T."/>
            <person name="Iida K."/>
            <person name="Akiyama K."/>
            <person name="Satou M."/>
            <person name="Toyoda T."/>
            <person name="Konagaya A."/>
            <person name="Carninci P."/>
            <person name="Kawai J."/>
            <person name="Hayashizaki Y."/>
            <person name="Shinozaki K."/>
        </authorList>
    </citation>
    <scope>NUCLEOTIDE SEQUENCE [LARGE SCALE MRNA]</scope>
    <source>
        <strain>cv. Columbia</strain>
    </source>
</reference>
<reference key="6">
    <citation type="journal article" date="2009" name="Mol. Cell">
        <title>Subunit compositions of the RNA-silencing enzymes Pol IV and Pol V reveal their origins as specialized forms of RNA polymerase II.</title>
        <authorList>
            <person name="Ream T.S."/>
            <person name="Haag J.R."/>
            <person name="Wierzbicki A.T."/>
            <person name="Nicora C.D."/>
            <person name="Norbeck A.D."/>
            <person name="Zhu J.K."/>
            <person name="Hagen G."/>
            <person name="Guilfoyle T.J."/>
            <person name="Pasa-Tolic L."/>
            <person name="Pikaard C.S."/>
        </authorList>
    </citation>
    <scope>NOMENCLATURE</scope>
</reference>
<proteinExistence type="evidence at transcript level"/>
<accession>Q6NML5</accession>
<accession>O23308</accession>
<keyword id="KW-0240">DNA-directed RNA polymerase</keyword>
<keyword id="KW-0539">Nucleus</keyword>
<keyword id="KW-1185">Reference proteome</keyword>
<keyword id="KW-0804">Transcription</keyword>